<feature type="chain" id="PRO_1000048471" description="DNA polymerase III PolC-type">
    <location>
        <begin position="1"/>
        <end position="1435"/>
    </location>
</feature>
<feature type="domain" description="Exonuclease">
    <location>
        <begin position="420"/>
        <end position="576"/>
    </location>
</feature>
<sequence length="1435" mass="161926">MLMSLTNEQQERFQILLQQLQIPDDLINQYLQGGGIERLVIDKANKSWHFDLQVPRILPTELYELLETKLKQSFSHIARTTFALETENKQFTEEEVRAYWPLCTERITFSPMFAYLKKQLPQVNGVKLLINVNNELESTALKKNVAKPVGDQYEVFGFPRFQLDTHIQQNTEEMQKFREQTQQEDRERVIQAMEEMAKKQAEESSVVYEGPITLGYLIKPDEEITPMREIQDEERRKTVQGYVFHVETKELRSGRTLLTLKITDYTDSIMIKMFSRDKEDIPMLQSLKKGMWVKARGSVQNDTFVRDLVMIANDINEITGPSRKDKAPEGEKRVELHLHTPMSQMDAVTPVSKLVAQAGKWGHEAIAVTDHAVAQSFPEAYSAGKKAGVKVIYGVEANLVNDGVPIAYNEAHRLLAEETYVVFDVETTGLSAVYDTVIELAAVKVKGGEIIDRFESFANPHQPLSATIIELTGITDDMLTDAPEVDEVFKKFEEWMGDHTLVAHNASFDMGFINVGFKKAGLEKTNNPVIDTLELARFLFPEMKNHRLNTMCKKLDIELTQHHRAIYDTEATGYLLVKMLKDVIEKGFEYHDQLNDSMGQGDAYKRGRPSHMTLLATSDVGLKNLYKLVSYSHLNYFYRVPRVPRSLLKKYREGILVGTACDKGEVFEAMMQKAPEEVEEIAQFYDYIEVMPPEVLRHLVERELVRDEGQLKTIISNLVKLGETLDKPVVATGNVHYLDPEDAMYRKILVSSQGGANPLNRHSLPPVHFRTTDEMLECFSFLGEDKAKEVVVTNTQKIASLIGDVHPVKDDLYTPKIEGADDETRDMSYKMARSIYGEELPEIVEARLEKELKSIIGHGFAVIYLISHKLVKKSLVDGYLVGSRGSVGSSFVATMMEITEVNPLPPHYVCPKCKQSEFFNDGSVGSGFDLPDKECPACNIPYVKDGHDIPFETFLGFKGDKVPDIDLNFSGEYQPRAHNYTKVLFGEDYVYRAGTIGTVAEKTAYGYVKGYANDHNLTIRNAEIDRLVAGCTGVKRTTGQHPGGIIVVPDYMDIFDFSPIQYPADSIGAEWRTTHFDFHSIHDNLLKLDILGHDDPTVIRMLQDLSGIDPKTIPTDDPEVMKIFSGPESLGVTEEQINCKTGTLGIPEFGTKFVRQMLEETKPTTFSELVQISGLSHGTDVWLGNANELIYNGTCTLSEVIGCRDDIMVYLIYQGLDPSLAFKIMESVRKGKGVPEEWEEDMKNNNVPGWYIDSCKKIKYMFPKAHAAAYVLMAVRIAYFKVHFALLFYAAYFTVRADDFDVEAMAKGSASIRARIDEIAQKGLDAAPKEKSLLTVLEMTLEMCERGYSFQKVDLYRSHATEFIIDGDTLIPPFNAVPGLGTNAALSIVEARKNGDFLSKEDLQQRSKVSKTIIEYLDSQGCLGDLPDQNQLSLF</sequence>
<keyword id="KW-0963">Cytoplasm</keyword>
<keyword id="KW-0235">DNA replication</keyword>
<keyword id="KW-0239">DNA-directed DNA polymerase</keyword>
<keyword id="KW-0269">Exonuclease</keyword>
<keyword id="KW-0378">Hydrolase</keyword>
<keyword id="KW-0540">Nuclease</keyword>
<keyword id="KW-0548">Nucleotidyltransferase</keyword>
<keyword id="KW-1185">Reference proteome</keyword>
<keyword id="KW-0808">Transferase</keyword>
<protein>
    <recommendedName>
        <fullName evidence="1">DNA polymerase III PolC-type</fullName>
        <shortName evidence="1">PolIII</shortName>
        <ecNumber evidence="1">2.7.7.7</ecNumber>
    </recommendedName>
</protein>
<comment type="function">
    <text evidence="1">Required for replicative DNA synthesis. This DNA polymerase also exhibits 3' to 5' exonuclease activity.</text>
</comment>
<comment type="catalytic activity">
    <reaction evidence="1">
        <text>DNA(n) + a 2'-deoxyribonucleoside 5'-triphosphate = DNA(n+1) + diphosphate</text>
        <dbReference type="Rhea" id="RHEA:22508"/>
        <dbReference type="Rhea" id="RHEA-COMP:17339"/>
        <dbReference type="Rhea" id="RHEA-COMP:17340"/>
        <dbReference type="ChEBI" id="CHEBI:33019"/>
        <dbReference type="ChEBI" id="CHEBI:61560"/>
        <dbReference type="ChEBI" id="CHEBI:173112"/>
        <dbReference type="EC" id="2.7.7.7"/>
    </reaction>
</comment>
<comment type="subcellular location">
    <subcellularLocation>
        <location evidence="1">Cytoplasm</location>
    </subcellularLocation>
</comment>
<comment type="similarity">
    <text evidence="1">Belongs to the DNA polymerase type-C family. PolC subfamily.</text>
</comment>
<organism>
    <name type="scientific">Bacillus cereus (strain ATCC 14579 / DSM 31 / CCUG 7414 / JCM 2152 / NBRC 15305 / NCIMB 9373 / NCTC 2599 / NRRL B-3711)</name>
    <dbReference type="NCBI Taxonomy" id="226900"/>
    <lineage>
        <taxon>Bacteria</taxon>
        <taxon>Bacillati</taxon>
        <taxon>Bacillota</taxon>
        <taxon>Bacilli</taxon>
        <taxon>Bacillales</taxon>
        <taxon>Bacillaceae</taxon>
        <taxon>Bacillus</taxon>
        <taxon>Bacillus cereus group</taxon>
    </lineage>
</organism>
<name>DPO3_BACCR</name>
<gene>
    <name evidence="1" type="primary">polC</name>
    <name type="ordered locus">BC_3816</name>
</gene>
<accession>Q819Y5</accession>
<reference key="1">
    <citation type="journal article" date="2003" name="Nature">
        <title>Genome sequence of Bacillus cereus and comparative analysis with Bacillus anthracis.</title>
        <authorList>
            <person name="Ivanova N."/>
            <person name="Sorokin A."/>
            <person name="Anderson I."/>
            <person name="Galleron N."/>
            <person name="Candelon B."/>
            <person name="Kapatral V."/>
            <person name="Bhattacharyya A."/>
            <person name="Reznik G."/>
            <person name="Mikhailova N."/>
            <person name="Lapidus A."/>
            <person name="Chu L."/>
            <person name="Mazur M."/>
            <person name="Goltsman E."/>
            <person name="Larsen N."/>
            <person name="D'Souza M."/>
            <person name="Walunas T."/>
            <person name="Grechkin Y."/>
            <person name="Pusch G."/>
            <person name="Haselkorn R."/>
            <person name="Fonstein M."/>
            <person name="Ehrlich S.D."/>
            <person name="Overbeek R."/>
            <person name="Kyrpides N.C."/>
        </authorList>
    </citation>
    <scope>NUCLEOTIDE SEQUENCE [LARGE SCALE GENOMIC DNA]</scope>
    <source>
        <strain>ATCC 14579 / DSM 31 / CCUG 7414 / JCM 2152 / NBRC 15305 / NCIMB 9373 / NCTC 2599 / NRRL B-3711</strain>
    </source>
</reference>
<evidence type="ECO:0000255" key="1">
    <source>
        <dbReference type="HAMAP-Rule" id="MF_00356"/>
    </source>
</evidence>
<proteinExistence type="inferred from homology"/>
<dbReference type="EC" id="2.7.7.7" evidence="1"/>
<dbReference type="EMBL" id="AE016877">
    <property type="protein sequence ID" value="AAP10739.1"/>
    <property type="molecule type" value="Genomic_DNA"/>
</dbReference>
<dbReference type="RefSeq" id="NP_833538.1">
    <property type="nucleotide sequence ID" value="NC_004722.1"/>
</dbReference>
<dbReference type="SMR" id="Q819Y5"/>
<dbReference type="STRING" id="226900.BC_3816"/>
<dbReference type="KEGG" id="bce:BC3816"/>
<dbReference type="PATRIC" id="fig|226900.8.peg.3933"/>
<dbReference type="HOGENOM" id="CLU_003297_2_0_9"/>
<dbReference type="Proteomes" id="UP000001417">
    <property type="component" value="Chromosome"/>
</dbReference>
<dbReference type="GO" id="GO:0005737">
    <property type="term" value="C:cytoplasm"/>
    <property type="evidence" value="ECO:0007669"/>
    <property type="project" value="UniProtKB-SubCell"/>
</dbReference>
<dbReference type="GO" id="GO:0008408">
    <property type="term" value="F:3'-5' exonuclease activity"/>
    <property type="evidence" value="ECO:0007669"/>
    <property type="project" value="UniProtKB-UniRule"/>
</dbReference>
<dbReference type="GO" id="GO:0003677">
    <property type="term" value="F:DNA binding"/>
    <property type="evidence" value="ECO:0007669"/>
    <property type="project" value="UniProtKB-UniRule"/>
</dbReference>
<dbReference type="GO" id="GO:0003887">
    <property type="term" value="F:DNA-directed DNA polymerase activity"/>
    <property type="evidence" value="ECO:0000318"/>
    <property type="project" value="GO_Central"/>
</dbReference>
<dbReference type="GO" id="GO:0006261">
    <property type="term" value="P:DNA-templated DNA replication"/>
    <property type="evidence" value="ECO:0007669"/>
    <property type="project" value="UniProtKB-UniRule"/>
</dbReference>
<dbReference type="CDD" id="cd06127">
    <property type="entry name" value="DEDDh"/>
    <property type="match status" value="1"/>
</dbReference>
<dbReference type="CDD" id="cd07435">
    <property type="entry name" value="PHP_PolIIIA_POLC"/>
    <property type="match status" value="1"/>
</dbReference>
<dbReference type="CDD" id="cd04484">
    <property type="entry name" value="polC_OBF"/>
    <property type="match status" value="1"/>
</dbReference>
<dbReference type="FunFam" id="3.30.420.10:FF:000045">
    <property type="entry name" value="3'-5' exonuclease DinG"/>
    <property type="match status" value="1"/>
</dbReference>
<dbReference type="Gene3D" id="1.10.150.870">
    <property type="match status" value="1"/>
</dbReference>
<dbReference type="Gene3D" id="3.30.1900.20">
    <property type="match status" value="2"/>
</dbReference>
<dbReference type="Gene3D" id="6.10.140.1510">
    <property type="match status" value="1"/>
</dbReference>
<dbReference type="Gene3D" id="3.20.20.140">
    <property type="entry name" value="Metal-dependent hydrolases"/>
    <property type="match status" value="1"/>
</dbReference>
<dbReference type="Gene3D" id="2.40.50.140">
    <property type="entry name" value="Nucleic acid-binding proteins"/>
    <property type="match status" value="1"/>
</dbReference>
<dbReference type="Gene3D" id="1.10.150.700">
    <property type="entry name" value="PolC, middle finger domain"/>
    <property type="match status" value="1"/>
</dbReference>
<dbReference type="Gene3D" id="3.30.420.10">
    <property type="entry name" value="Ribonuclease H-like superfamily/Ribonuclease H"/>
    <property type="match status" value="1"/>
</dbReference>
<dbReference type="HAMAP" id="MF_00356">
    <property type="entry name" value="DNApol_PolC"/>
    <property type="match status" value="1"/>
</dbReference>
<dbReference type="InterPro" id="IPR011708">
    <property type="entry name" value="DNA_pol3_alpha_NTPase_dom"/>
</dbReference>
<dbReference type="InterPro" id="IPR040982">
    <property type="entry name" value="DNA_pol3_finger"/>
</dbReference>
<dbReference type="InterPro" id="IPR024754">
    <property type="entry name" value="DNA_PolC-like_N_II"/>
</dbReference>
<dbReference type="InterPro" id="IPR028112">
    <property type="entry name" value="DNA_PolC-type_N_I"/>
</dbReference>
<dbReference type="InterPro" id="IPR004805">
    <property type="entry name" value="DnaE2/DnaE/PolC"/>
</dbReference>
<dbReference type="InterPro" id="IPR029460">
    <property type="entry name" value="DNAPol_HHH"/>
</dbReference>
<dbReference type="InterPro" id="IPR006054">
    <property type="entry name" value="DnaQ"/>
</dbReference>
<dbReference type="InterPro" id="IPR013520">
    <property type="entry name" value="Exonuclease_RNaseT/DNA_pol3"/>
</dbReference>
<dbReference type="InterPro" id="IPR012340">
    <property type="entry name" value="NA-bd_OB-fold"/>
</dbReference>
<dbReference type="InterPro" id="IPR004365">
    <property type="entry name" value="NA-bd_OB_tRNA"/>
</dbReference>
<dbReference type="InterPro" id="IPR004013">
    <property type="entry name" value="PHP_dom"/>
</dbReference>
<dbReference type="InterPro" id="IPR003141">
    <property type="entry name" value="Pol/His_phosphatase_N"/>
</dbReference>
<dbReference type="InterPro" id="IPR006308">
    <property type="entry name" value="Pol_III_a_PolC-type_gram_pos"/>
</dbReference>
<dbReference type="InterPro" id="IPR044923">
    <property type="entry name" value="PolC_middle_finger_sf"/>
</dbReference>
<dbReference type="InterPro" id="IPR012337">
    <property type="entry name" value="RNaseH-like_sf"/>
</dbReference>
<dbReference type="InterPro" id="IPR036397">
    <property type="entry name" value="RNaseH_sf"/>
</dbReference>
<dbReference type="NCBIfam" id="TIGR00573">
    <property type="entry name" value="dnaq"/>
    <property type="match status" value="1"/>
</dbReference>
<dbReference type="NCBIfam" id="TIGR01405">
    <property type="entry name" value="polC_Gram_pos"/>
    <property type="match status" value="1"/>
</dbReference>
<dbReference type="NCBIfam" id="NF001688">
    <property type="entry name" value="PRK00448.1"/>
    <property type="match status" value="1"/>
</dbReference>
<dbReference type="PANTHER" id="PTHR32294:SF5">
    <property type="entry name" value="DNA POLYMERASE III POLC-TYPE"/>
    <property type="match status" value="1"/>
</dbReference>
<dbReference type="PANTHER" id="PTHR32294">
    <property type="entry name" value="DNA POLYMERASE III SUBUNIT ALPHA"/>
    <property type="match status" value="1"/>
</dbReference>
<dbReference type="Pfam" id="PF14480">
    <property type="entry name" value="DNA_pol3_a_NI"/>
    <property type="match status" value="1"/>
</dbReference>
<dbReference type="Pfam" id="PF11490">
    <property type="entry name" value="DNA_pol3_a_NII"/>
    <property type="match status" value="1"/>
</dbReference>
<dbReference type="Pfam" id="PF07733">
    <property type="entry name" value="DNA_pol3_alpha"/>
    <property type="match status" value="2"/>
</dbReference>
<dbReference type="Pfam" id="PF17657">
    <property type="entry name" value="DNA_pol3_finger"/>
    <property type="match status" value="1"/>
</dbReference>
<dbReference type="Pfam" id="PF14579">
    <property type="entry name" value="HHH_6"/>
    <property type="match status" value="1"/>
</dbReference>
<dbReference type="Pfam" id="PF02811">
    <property type="entry name" value="PHP"/>
    <property type="match status" value="2"/>
</dbReference>
<dbReference type="Pfam" id="PF00929">
    <property type="entry name" value="RNase_T"/>
    <property type="match status" value="1"/>
</dbReference>
<dbReference type="Pfam" id="PF01336">
    <property type="entry name" value="tRNA_anti-codon"/>
    <property type="match status" value="1"/>
</dbReference>
<dbReference type="SMART" id="SM00479">
    <property type="entry name" value="EXOIII"/>
    <property type="match status" value="1"/>
</dbReference>
<dbReference type="SMART" id="SM00481">
    <property type="entry name" value="POLIIIAc"/>
    <property type="match status" value="1"/>
</dbReference>
<dbReference type="SUPFAM" id="SSF160975">
    <property type="entry name" value="AF1531-like"/>
    <property type="match status" value="1"/>
</dbReference>
<dbReference type="SUPFAM" id="SSF50249">
    <property type="entry name" value="Nucleic acid-binding proteins"/>
    <property type="match status" value="1"/>
</dbReference>
<dbReference type="SUPFAM" id="SSF53098">
    <property type="entry name" value="Ribonuclease H-like"/>
    <property type="match status" value="1"/>
</dbReference>